<keyword id="KW-0963">Cytoplasm</keyword>
<keyword id="KW-0251">Elongation factor</keyword>
<keyword id="KW-0342">GTP-binding</keyword>
<keyword id="KW-0378">Hydrolase</keyword>
<keyword id="KW-0460">Magnesium</keyword>
<keyword id="KW-0479">Metal-binding</keyword>
<keyword id="KW-0547">Nucleotide-binding</keyword>
<keyword id="KW-0648">Protein biosynthesis</keyword>
<name>EFTU_PSEU2</name>
<evidence type="ECO:0000250" key="1"/>
<evidence type="ECO:0000255" key="2">
    <source>
        <dbReference type="HAMAP-Rule" id="MF_00118"/>
    </source>
</evidence>
<sequence length="397" mass="43387">MAKEKFDRSLPHVNVGTIGHVDHGKTTLTAALTRVCSEVFGSAAVEFDKIDSAPEEKARGITINTAHVEYKSLIRHYAHVDCPGHADYVKNMITGAAQMDGAILVCSAADGPMPQTREHILLSRQVGVPYIVVFLNKADLVDDAELLELVEMEVRDLLSTYDFPGDDTPIIIGSARMALEGKDDNEMGTTAVRKLVETLDSYIPEPVRVTDKPFLMPIEDVFSISGRGTVVTGRIERGIVKVQDPLEIVGLRDTTVTTCTGVEMFRKLLDEGRAGENCGVLLRGTKRDDVERGQVLVKPGSVKPHTQFEAEIYVLSKEEGGRHTPFFKGYRPQFYFRTTDVTGSCELPEGVEMVMPGDNVKVSVTLIKPIAMEDGLRFAIREGGRTVGAGVVAKIIA</sequence>
<reference key="1">
    <citation type="journal article" date="2005" name="Proc. Natl. Acad. Sci. U.S.A.">
        <title>Comparison of the complete genome sequences of Pseudomonas syringae pv. syringae B728a and pv. tomato DC3000.</title>
        <authorList>
            <person name="Feil H."/>
            <person name="Feil W.S."/>
            <person name="Chain P."/>
            <person name="Larimer F."/>
            <person name="Dibartolo G."/>
            <person name="Copeland A."/>
            <person name="Lykidis A."/>
            <person name="Trong S."/>
            <person name="Nolan M."/>
            <person name="Goltsman E."/>
            <person name="Thiel J."/>
            <person name="Malfatti S."/>
            <person name="Loper J.E."/>
            <person name="Lapidus A."/>
            <person name="Detter J.C."/>
            <person name="Land M."/>
            <person name="Richardson P.M."/>
            <person name="Kyrpides N.C."/>
            <person name="Ivanova N."/>
            <person name="Lindow S.E."/>
        </authorList>
    </citation>
    <scope>NUCLEOTIDE SEQUENCE [LARGE SCALE GENOMIC DNA]</scope>
    <source>
        <strain>B728a</strain>
    </source>
</reference>
<organism>
    <name type="scientific">Pseudomonas syringae pv. syringae (strain B728a)</name>
    <dbReference type="NCBI Taxonomy" id="205918"/>
    <lineage>
        <taxon>Bacteria</taxon>
        <taxon>Pseudomonadati</taxon>
        <taxon>Pseudomonadota</taxon>
        <taxon>Gammaproteobacteria</taxon>
        <taxon>Pseudomonadales</taxon>
        <taxon>Pseudomonadaceae</taxon>
        <taxon>Pseudomonas</taxon>
        <taxon>Pseudomonas syringae</taxon>
    </lineage>
</organism>
<dbReference type="EC" id="3.6.5.3" evidence="2"/>
<dbReference type="EMBL" id="CP000075">
    <property type="protein sequence ID" value="AAY39580.1"/>
    <property type="molecule type" value="Genomic_DNA"/>
</dbReference>
<dbReference type="RefSeq" id="WP_003344210.1">
    <property type="nucleotide sequence ID" value="NC_007005.1"/>
</dbReference>
<dbReference type="RefSeq" id="YP_237618.1">
    <property type="nucleotide sequence ID" value="NC_007005.1"/>
</dbReference>
<dbReference type="SMR" id="Q4ZMP2"/>
<dbReference type="STRING" id="205918.Psyr_4550"/>
<dbReference type="GeneID" id="77280376"/>
<dbReference type="KEGG" id="psb:Psyr_4550"/>
<dbReference type="PATRIC" id="fig|205918.7.peg.4689"/>
<dbReference type="eggNOG" id="COG0050">
    <property type="taxonomic scope" value="Bacteria"/>
</dbReference>
<dbReference type="HOGENOM" id="CLU_007265_0_2_6"/>
<dbReference type="OrthoDB" id="9803139at2"/>
<dbReference type="Proteomes" id="UP000000426">
    <property type="component" value="Chromosome"/>
</dbReference>
<dbReference type="GO" id="GO:0005829">
    <property type="term" value="C:cytosol"/>
    <property type="evidence" value="ECO:0007669"/>
    <property type="project" value="TreeGrafter"/>
</dbReference>
<dbReference type="GO" id="GO:0005525">
    <property type="term" value="F:GTP binding"/>
    <property type="evidence" value="ECO:0007669"/>
    <property type="project" value="UniProtKB-UniRule"/>
</dbReference>
<dbReference type="GO" id="GO:0003924">
    <property type="term" value="F:GTPase activity"/>
    <property type="evidence" value="ECO:0007669"/>
    <property type="project" value="InterPro"/>
</dbReference>
<dbReference type="GO" id="GO:0097216">
    <property type="term" value="F:guanosine tetraphosphate binding"/>
    <property type="evidence" value="ECO:0007669"/>
    <property type="project" value="UniProtKB-ARBA"/>
</dbReference>
<dbReference type="GO" id="GO:0003746">
    <property type="term" value="F:translation elongation factor activity"/>
    <property type="evidence" value="ECO:0007669"/>
    <property type="project" value="UniProtKB-UniRule"/>
</dbReference>
<dbReference type="CDD" id="cd01884">
    <property type="entry name" value="EF_Tu"/>
    <property type="match status" value="1"/>
</dbReference>
<dbReference type="CDD" id="cd03697">
    <property type="entry name" value="EFTU_II"/>
    <property type="match status" value="1"/>
</dbReference>
<dbReference type="CDD" id="cd03707">
    <property type="entry name" value="EFTU_III"/>
    <property type="match status" value="1"/>
</dbReference>
<dbReference type="FunFam" id="2.40.30.10:FF:000001">
    <property type="entry name" value="Elongation factor Tu"/>
    <property type="match status" value="1"/>
</dbReference>
<dbReference type="FunFam" id="3.40.50.300:FF:000003">
    <property type="entry name" value="Elongation factor Tu"/>
    <property type="match status" value="1"/>
</dbReference>
<dbReference type="Gene3D" id="3.40.50.300">
    <property type="entry name" value="P-loop containing nucleotide triphosphate hydrolases"/>
    <property type="match status" value="1"/>
</dbReference>
<dbReference type="Gene3D" id="2.40.30.10">
    <property type="entry name" value="Translation factors"/>
    <property type="match status" value="2"/>
</dbReference>
<dbReference type="HAMAP" id="MF_00118_B">
    <property type="entry name" value="EF_Tu_B"/>
    <property type="match status" value="1"/>
</dbReference>
<dbReference type="InterPro" id="IPR041709">
    <property type="entry name" value="EF-Tu_GTP-bd"/>
</dbReference>
<dbReference type="InterPro" id="IPR050055">
    <property type="entry name" value="EF-Tu_GTPase"/>
</dbReference>
<dbReference type="InterPro" id="IPR004161">
    <property type="entry name" value="EFTu-like_2"/>
</dbReference>
<dbReference type="InterPro" id="IPR033720">
    <property type="entry name" value="EFTU_2"/>
</dbReference>
<dbReference type="InterPro" id="IPR031157">
    <property type="entry name" value="G_TR_CS"/>
</dbReference>
<dbReference type="InterPro" id="IPR027417">
    <property type="entry name" value="P-loop_NTPase"/>
</dbReference>
<dbReference type="InterPro" id="IPR005225">
    <property type="entry name" value="Small_GTP-bd"/>
</dbReference>
<dbReference type="InterPro" id="IPR000795">
    <property type="entry name" value="T_Tr_GTP-bd_dom"/>
</dbReference>
<dbReference type="InterPro" id="IPR009000">
    <property type="entry name" value="Transl_B-barrel_sf"/>
</dbReference>
<dbReference type="InterPro" id="IPR009001">
    <property type="entry name" value="Transl_elong_EF1A/Init_IF2_C"/>
</dbReference>
<dbReference type="InterPro" id="IPR004541">
    <property type="entry name" value="Transl_elong_EFTu/EF1A_bac/org"/>
</dbReference>
<dbReference type="InterPro" id="IPR004160">
    <property type="entry name" value="Transl_elong_EFTu/EF1A_C"/>
</dbReference>
<dbReference type="NCBIfam" id="TIGR00485">
    <property type="entry name" value="EF-Tu"/>
    <property type="match status" value="1"/>
</dbReference>
<dbReference type="NCBIfam" id="NF000766">
    <property type="entry name" value="PRK00049.1"/>
    <property type="match status" value="1"/>
</dbReference>
<dbReference type="NCBIfam" id="NF009372">
    <property type="entry name" value="PRK12735.1"/>
    <property type="match status" value="1"/>
</dbReference>
<dbReference type="NCBIfam" id="NF009373">
    <property type="entry name" value="PRK12736.1"/>
    <property type="match status" value="1"/>
</dbReference>
<dbReference type="NCBIfam" id="TIGR00231">
    <property type="entry name" value="small_GTP"/>
    <property type="match status" value="1"/>
</dbReference>
<dbReference type="PANTHER" id="PTHR43721:SF22">
    <property type="entry name" value="ELONGATION FACTOR TU, MITOCHONDRIAL"/>
    <property type="match status" value="1"/>
</dbReference>
<dbReference type="PANTHER" id="PTHR43721">
    <property type="entry name" value="ELONGATION FACTOR TU-RELATED"/>
    <property type="match status" value="1"/>
</dbReference>
<dbReference type="Pfam" id="PF00009">
    <property type="entry name" value="GTP_EFTU"/>
    <property type="match status" value="1"/>
</dbReference>
<dbReference type="Pfam" id="PF03144">
    <property type="entry name" value="GTP_EFTU_D2"/>
    <property type="match status" value="1"/>
</dbReference>
<dbReference type="Pfam" id="PF03143">
    <property type="entry name" value="GTP_EFTU_D3"/>
    <property type="match status" value="1"/>
</dbReference>
<dbReference type="PRINTS" id="PR00315">
    <property type="entry name" value="ELONGATNFCT"/>
</dbReference>
<dbReference type="SUPFAM" id="SSF50465">
    <property type="entry name" value="EF-Tu/eEF-1alpha/eIF2-gamma C-terminal domain"/>
    <property type="match status" value="1"/>
</dbReference>
<dbReference type="SUPFAM" id="SSF52540">
    <property type="entry name" value="P-loop containing nucleoside triphosphate hydrolases"/>
    <property type="match status" value="1"/>
</dbReference>
<dbReference type="SUPFAM" id="SSF50447">
    <property type="entry name" value="Translation proteins"/>
    <property type="match status" value="1"/>
</dbReference>
<dbReference type="PROSITE" id="PS00301">
    <property type="entry name" value="G_TR_1"/>
    <property type="match status" value="1"/>
</dbReference>
<dbReference type="PROSITE" id="PS51722">
    <property type="entry name" value="G_TR_2"/>
    <property type="match status" value="1"/>
</dbReference>
<protein>
    <recommendedName>
        <fullName evidence="2">Elongation factor Tu</fullName>
        <shortName evidence="2">EF-Tu</shortName>
        <ecNumber evidence="2">3.6.5.3</ecNumber>
    </recommendedName>
</protein>
<gene>
    <name evidence="2" type="primary">tuf</name>
    <name type="ordered locus">Psyr_4550</name>
</gene>
<accession>Q4ZMP2</accession>
<comment type="function">
    <text evidence="2">GTP hydrolase that promotes the GTP-dependent binding of aminoacyl-tRNA to the A-site of ribosomes during protein biosynthesis.</text>
</comment>
<comment type="catalytic activity">
    <reaction evidence="2">
        <text>GTP + H2O = GDP + phosphate + H(+)</text>
        <dbReference type="Rhea" id="RHEA:19669"/>
        <dbReference type="ChEBI" id="CHEBI:15377"/>
        <dbReference type="ChEBI" id="CHEBI:15378"/>
        <dbReference type="ChEBI" id="CHEBI:37565"/>
        <dbReference type="ChEBI" id="CHEBI:43474"/>
        <dbReference type="ChEBI" id="CHEBI:58189"/>
        <dbReference type="EC" id="3.6.5.3"/>
    </reaction>
    <physiologicalReaction direction="left-to-right" evidence="2">
        <dbReference type="Rhea" id="RHEA:19670"/>
    </physiologicalReaction>
</comment>
<comment type="subunit">
    <text evidence="2">Monomer.</text>
</comment>
<comment type="subcellular location">
    <subcellularLocation>
        <location evidence="2">Cytoplasm</location>
    </subcellularLocation>
</comment>
<comment type="similarity">
    <text evidence="2">Belongs to the TRAFAC class translation factor GTPase superfamily. Classic translation factor GTPase family. EF-Tu/EF-1A subfamily.</text>
</comment>
<proteinExistence type="inferred from homology"/>
<feature type="chain" id="PRO_1000015736" description="Elongation factor Tu">
    <location>
        <begin position="1"/>
        <end position="397"/>
    </location>
</feature>
<feature type="domain" description="tr-type G">
    <location>
        <begin position="10"/>
        <end position="207"/>
    </location>
</feature>
<feature type="region of interest" description="G1" evidence="1">
    <location>
        <begin position="19"/>
        <end position="26"/>
    </location>
</feature>
<feature type="region of interest" description="G2" evidence="1">
    <location>
        <begin position="60"/>
        <end position="64"/>
    </location>
</feature>
<feature type="region of interest" description="G3" evidence="1">
    <location>
        <begin position="81"/>
        <end position="84"/>
    </location>
</feature>
<feature type="region of interest" description="G4" evidence="1">
    <location>
        <begin position="136"/>
        <end position="139"/>
    </location>
</feature>
<feature type="region of interest" description="G5" evidence="1">
    <location>
        <begin position="174"/>
        <end position="176"/>
    </location>
</feature>
<feature type="binding site" evidence="2">
    <location>
        <begin position="19"/>
        <end position="26"/>
    </location>
    <ligand>
        <name>GTP</name>
        <dbReference type="ChEBI" id="CHEBI:37565"/>
    </ligand>
</feature>
<feature type="binding site" evidence="2">
    <location>
        <position position="26"/>
    </location>
    <ligand>
        <name>Mg(2+)</name>
        <dbReference type="ChEBI" id="CHEBI:18420"/>
    </ligand>
</feature>
<feature type="binding site" evidence="2">
    <location>
        <begin position="81"/>
        <end position="85"/>
    </location>
    <ligand>
        <name>GTP</name>
        <dbReference type="ChEBI" id="CHEBI:37565"/>
    </ligand>
</feature>
<feature type="binding site" evidence="2">
    <location>
        <begin position="136"/>
        <end position="139"/>
    </location>
    <ligand>
        <name>GTP</name>
        <dbReference type="ChEBI" id="CHEBI:37565"/>
    </ligand>
</feature>